<feature type="chain" id="PRO_0000102610" description="Ribosome-binding factor A">
    <location>
        <begin position="1"/>
        <end position="117"/>
    </location>
</feature>
<accession>Q5PAJ6</accession>
<sequence>MIAFTPSAGLRSLKVASVLKRALAQLFIREFYDLSSMLSISGVKVSEDTRNATVFVAIGDKSVDGDEVVAALNDASNSIRRAVFRYLKLRYVPRLHFKLDVEFDNFLRISEIMATTK</sequence>
<keyword id="KW-0963">Cytoplasm</keyword>
<keyword id="KW-0690">Ribosome biogenesis</keyword>
<evidence type="ECO:0000255" key="1">
    <source>
        <dbReference type="HAMAP-Rule" id="MF_00003"/>
    </source>
</evidence>
<proteinExistence type="inferred from homology"/>
<comment type="function">
    <text evidence="1">One of several proteins that assist in the late maturation steps of the functional core of the 30S ribosomal subunit. Associates with free 30S ribosomal subunits (but not with 30S subunits that are part of 70S ribosomes or polysomes). Required for efficient processing of 16S rRNA. May interact with the 5'-terminal helix region of 16S rRNA.</text>
</comment>
<comment type="subunit">
    <text evidence="1">Monomer. Binds 30S ribosomal subunits, but not 50S ribosomal subunits or 70S ribosomes.</text>
</comment>
<comment type="subcellular location">
    <subcellularLocation>
        <location evidence="1">Cytoplasm</location>
    </subcellularLocation>
</comment>
<comment type="similarity">
    <text evidence="1">Belongs to the RbfA family.</text>
</comment>
<gene>
    <name evidence="1" type="primary">rbfA</name>
    <name type="ordered locus">AM734</name>
</gene>
<organism>
    <name type="scientific">Anaplasma marginale (strain St. Maries)</name>
    <dbReference type="NCBI Taxonomy" id="234826"/>
    <lineage>
        <taxon>Bacteria</taxon>
        <taxon>Pseudomonadati</taxon>
        <taxon>Pseudomonadota</taxon>
        <taxon>Alphaproteobacteria</taxon>
        <taxon>Rickettsiales</taxon>
        <taxon>Anaplasmataceae</taxon>
        <taxon>Anaplasma</taxon>
    </lineage>
</organism>
<reference key="1">
    <citation type="journal article" date="2005" name="Proc. Natl. Acad. Sci. U.S.A.">
        <title>Complete genome sequencing of Anaplasma marginale reveals that the surface is skewed to two superfamilies of outer membrane proteins.</title>
        <authorList>
            <person name="Brayton K.A."/>
            <person name="Kappmeyer L.S."/>
            <person name="Herndon D.R."/>
            <person name="Dark M.J."/>
            <person name="Tibbals D.L."/>
            <person name="Palmer G.H."/>
            <person name="McGuire T.C."/>
            <person name="Knowles D.P. Jr."/>
        </authorList>
    </citation>
    <scope>NUCLEOTIDE SEQUENCE [LARGE SCALE GENOMIC DNA]</scope>
    <source>
        <strain>St. Maries</strain>
    </source>
</reference>
<name>RBFA_ANAMM</name>
<dbReference type="EMBL" id="CP000030">
    <property type="protein sequence ID" value="AAV86684.1"/>
    <property type="molecule type" value="Genomic_DNA"/>
</dbReference>
<dbReference type="RefSeq" id="WP_010264781.1">
    <property type="nucleotide sequence ID" value="NZ_AFMU01000005.1"/>
</dbReference>
<dbReference type="SMR" id="Q5PAJ6"/>
<dbReference type="GeneID" id="7398156"/>
<dbReference type="KEGG" id="ama:AM734"/>
<dbReference type="HOGENOM" id="CLU_089475_1_1_5"/>
<dbReference type="GO" id="GO:0005829">
    <property type="term" value="C:cytosol"/>
    <property type="evidence" value="ECO:0007669"/>
    <property type="project" value="TreeGrafter"/>
</dbReference>
<dbReference type="GO" id="GO:0043024">
    <property type="term" value="F:ribosomal small subunit binding"/>
    <property type="evidence" value="ECO:0007669"/>
    <property type="project" value="TreeGrafter"/>
</dbReference>
<dbReference type="GO" id="GO:0030490">
    <property type="term" value="P:maturation of SSU-rRNA"/>
    <property type="evidence" value="ECO:0007669"/>
    <property type="project" value="UniProtKB-UniRule"/>
</dbReference>
<dbReference type="Gene3D" id="3.30.300.20">
    <property type="match status" value="1"/>
</dbReference>
<dbReference type="HAMAP" id="MF_00003">
    <property type="entry name" value="RbfA"/>
    <property type="match status" value="1"/>
</dbReference>
<dbReference type="InterPro" id="IPR015946">
    <property type="entry name" value="KH_dom-like_a/b"/>
</dbReference>
<dbReference type="InterPro" id="IPR000238">
    <property type="entry name" value="RbfA"/>
</dbReference>
<dbReference type="InterPro" id="IPR023799">
    <property type="entry name" value="RbfA_dom_sf"/>
</dbReference>
<dbReference type="InterPro" id="IPR020053">
    <property type="entry name" value="Ribosome-bd_factorA_CS"/>
</dbReference>
<dbReference type="NCBIfam" id="TIGR00082">
    <property type="entry name" value="rbfA"/>
    <property type="match status" value="1"/>
</dbReference>
<dbReference type="PANTHER" id="PTHR33515">
    <property type="entry name" value="RIBOSOME-BINDING FACTOR A, CHLOROPLASTIC-RELATED"/>
    <property type="match status" value="1"/>
</dbReference>
<dbReference type="PANTHER" id="PTHR33515:SF1">
    <property type="entry name" value="RIBOSOME-BINDING FACTOR A, CHLOROPLASTIC-RELATED"/>
    <property type="match status" value="1"/>
</dbReference>
<dbReference type="Pfam" id="PF02033">
    <property type="entry name" value="RBFA"/>
    <property type="match status" value="1"/>
</dbReference>
<dbReference type="SUPFAM" id="SSF89919">
    <property type="entry name" value="Ribosome-binding factor A, RbfA"/>
    <property type="match status" value="1"/>
</dbReference>
<dbReference type="PROSITE" id="PS01319">
    <property type="entry name" value="RBFA"/>
    <property type="match status" value="1"/>
</dbReference>
<protein>
    <recommendedName>
        <fullName evidence="1">Ribosome-binding factor A</fullName>
    </recommendedName>
</protein>